<comment type="function">
    <text evidence="1">Pore-forming subunit of a potassium efflux system that confers protection against electrophiles. Catalyzes K(+)/H(+) antiport.</text>
</comment>
<comment type="subunit">
    <text evidence="1">Homodimer. Interacts with the regulatory subunit KefF.</text>
</comment>
<comment type="subcellular location">
    <subcellularLocation>
        <location evidence="1">Cell inner membrane</location>
        <topology evidence="1">Multi-pass membrane protein</topology>
    </subcellularLocation>
</comment>
<comment type="similarity">
    <text evidence="1">Belongs to the monovalent cation:proton antiporter 2 (CPA2) transporter (TC 2.A.37) family. KefC subfamily.</text>
</comment>
<reference key="1">
    <citation type="journal article" date="2000" name="J. Bacteriol.">
        <title>Identification of an ancillary protein, YabF, required for activity of the KefC glutathione-gated potassium efflux system in Escherichia coli.</title>
        <authorList>
            <person name="Miller S."/>
            <person name="Ness L.S."/>
            <person name="Wood C.M."/>
            <person name="Fox B.C."/>
            <person name="Booth I.R."/>
        </authorList>
    </citation>
    <scope>NUCLEOTIDE SEQUENCE [GENOMIC DNA]</scope>
</reference>
<sequence length="621" mass="67353">MDSHTLIQALIYLGAAALIVPIASVLGLGSVLGYLIAGCIIGPWALRLVNDAEAILHFAEIGVVLMLVAMGLELDPQRLWKLRASVFDGGALQMVACGVLIGLFCMLLGLRWQVAELIGMTLALSSTAIAMQAMNERNLTVSQMGRSAFAVLLFQDIAAIPLVAMIPLLAASGGATSLMAFALSALKVAAALALVVVLGRYLTRPLLRFVARSGLREVFSAVACSWSSALGLLLEEVGLSMAMGAFLAGVLLASSEYRHALENDIEPVKGLLLGLFFIGVGMSIDFAPWSPNPLRIVILLVGFPAIKMLMLWLIAQPLGVPRAQHRWFAVLLGQGSEFAFVVFGPARMADVLDGEWPKALTLAVALSMATTPILLVLLTRLEKSSSGQARDADEIDEEQPRVIVAGFGRFGQIAGRLLLSSGVKMVILDHDPDHVDTLRKFDMKVFYGDATRVDLLESAGAEKAEVLINAIDDPHVSLELVARVKEHFPHLQIISRARDVDHYIQLRQAGVEAPERETFEAALKSGRMTLEALGLGAYEARERPDLFRRFNLQMVEEMVAMAENDPRRGVAVFKRTSDMLTGIINEDRHHLSLVQRHGWQGTEEGRHTGDIADEPENKPSA</sequence>
<protein>
    <recommendedName>
        <fullName evidence="1">Glutathione-regulated potassium-efflux system protein KefC</fullName>
    </recommendedName>
    <alternativeName>
        <fullName evidence="1">K(+)/H(+) antiporter</fullName>
    </alternativeName>
</protein>
<organism>
    <name type="scientific">Klebsiella aerogenes</name>
    <name type="common">Enterobacter aerogenes</name>
    <dbReference type="NCBI Taxonomy" id="548"/>
    <lineage>
        <taxon>Bacteria</taxon>
        <taxon>Pseudomonadati</taxon>
        <taxon>Pseudomonadota</taxon>
        <taxon>Gammaproteobacteria</taxon>
        <taxon>Enterobacterales</taxon>
        <taxon>Enterobacteriaceae</taxon>
        <taxon>Klebsiella/Raoultella group</taxon>
        <taxon>Klebsiella</taxon>
    </lineage>
</organism>
<gene>
    <name evidence="1" type="primary">kefC</name>
</gene>
<name>KEFC_KLEAE</name>
<keyword id="KW-0050">Antiport</keyword>
<keyword id="KW-0997">Cell inner membrane</keyword>
<keyword id="KW-1003">Cell membrane</keyword>
<keyword id="KW-0406">Ion transport</keyword>
<keyword id="KW-0472">Membrane</keyword>
<keyword id="KW-0630">Potassium</keyword>
<keyword id="KW-0633">Potassium transport</keyword>
<keyword id="KW-0812">Transmembrane</keyword>
<keyword id="KW-1133">Transmembrane helix</keyword>
<keyword id="KW-0813">Transport</keyword>
<evidence type="ECO:0000255" key="1">
    <source>
        <dbReference type="HAMAP-Rule" id="MF_01413"/>
    </source>
</evidence>
<evidence type="ECO:0000255" key="2">
    <source>
        <dbReference type="PROSITE-ProRule" id="PRU00543"/>
    </source>
</evidence>
<evidence type="ECO:0000256" key="3">
    <source>
        <dbReference type="SAM" id="MobiDB-lite"/>
    </source>
</evidence>
<feature type="chain" id="PRO_0000196609" description="Glutathione-regulated potassium-efflux system protein KefC">
    <location>
        <begin position="1"/>
        <end position="621"/>
    </location>
</feature>
<feature type="transmembrane region" description="Helical" evidence="1">
    <location>
        <begin position="9"/>
        <end position="29"/>
    </location>
</feature>
<feature type="transmembrane region" description="Helical" evidence="1">
    <location>
        <begin position="30"/>
        <end position="50"/>
    </location>
</feature>
<feature type="transmembrane region" description="Helical" evidence="1">
    <location>
        <begin position="54"/>
        <end position="74"/>
    </location>
</feature>
<feature type="transmembrane region" description="Helical" evidence="1">
    <location>
        <begin position="90"/>
        <end position="110"/>
    </location>
</feature>
<feature type="transmembrane region" description="Helical" evidence="1">
    <location>
        <begin position="114"/>
        <end position="134"/>
    </location>
</feature>
<feature type="transmembrane region" description="Helical" evidence="1">
    <location>
        <begin position="149"/>
        <end position="169"/>
    </location>
</feature>
<feature type="transmembrane region" description="Helical" evidence="1">
    <location>
        <begin position="178"/>
        <end position="198"/>
    </location>
</feature>
<feature type="transmembrane region" description="Helical" evidence="1">
    <location>
        <begin position="232"/>
        <end position="252"/>
    </location>
</feature>
<feature type="transmembrane region" description="Helical" evidence="1">
    <location>
        <begin position="270"/>
        <end position="290"/>
    </location>
</feature>
<feature type="transmembrane region" description="Helical" evidence="1">
    <location>
        <begin position="296"/>
        <end position="316"/>
    </location>
</feature>
<feature type="transmembrane region" description="Helical" evidence="1">
    <location>
        <begin position="326"/>
        <end position="346"/>
    </location>
</feature>
<feature type="transmembrane region" description="Helical" evidence="1">
    <location>
        <begin position="359"/>
        <end position="379"/>
    </location>
</feature>
<feature type="domain" description="RCK N-terminal" evidence="2">
    <location>
        <begin position="399"/>
        <end position="518"/>
    </location>
</feature>
<feature type="region of interest" description="Disordered" evidence="3">
    <location>
        <begin position="598"/>
        <end position="621"/>
    </location>
</feature>
<proteinExistence type="inferred from homology"/>
<dbReference type="EMBL" id="AJ242913">
    <property type="protein sequence ID" value="CAB44437.1"/>
    <property type="molecule type" value="Genomic_DNA"/>
</dbReference>
<dbReference type="SMR" id="Q9X756"/>
<dbReference type="STRING" id="548.EAG7_03294"/>
<dbReference type="GO" id="GO:0005886">
    <property type="term" value="C:plasma membrane"/>
    <property type="evidence" value="ECO:0007669"/>
    <property type="project" value="UniProtKB-SubCell"/>
</dbReference>
<dbReference type="GO" id="GO:0019899">
    <property type="term" value="F:enzyme binding"/>
    <property type="evidence" value="ECO:0007669"/>
    <property type="project" value="InterPro"/>
</dbReference>
<dbReference type="GO" id="GO:0015503">
    <property type="term" value="F:glutathione-regulated potassium exporter activity"/>
    <property type="evidence" value="ECO:0007669"/>
    <property type="project" value="UniProtKB-UniRule"/>
</dbReference>
<dbReference type="GO" id="GO:0015643">
    <property type="term" value="F:toxic substance binding"/>
    <property type="evidence" value="ECO:0007669"/>
    <property type="project" value="InterPro"/>
</dbReference>
<dbReference type="GO" id="GO:1902600">
    <property type="term" value="P:proton transmembrane transport"/>
    <property type="evidence" value="ECO:0007669"/>
    <property type="project" value="InterPro"/>
</dbReference>
<dbReference type="GO" id="GO:0051595">
    <property type="term" value="P:response to methylglyoxal"/>
    <property type="evidence" value="ECO:0007669"/>
    <property type="project" value="InterPro"/>
</dbReference>
<dbReference type="FunFam" id="1.20.1530.20:FF:000001">
    <property type="entry name" value="Glutathione-regulated potassium-efflux system protein KefB"/>
    <property type="match status" value="1"/>
</dbReference>
<dbReference type="FunFam" id="3.40.50.720:FF:000036">
    <property type="entry name" value="Glutathione-regulated potassium-efflux system protein KefB"/>
    <property type="match status" value="1"/>
</dbReference>
<dbReference type="Gene3D" id="1.20.1530.20">
    <property type="match status" value="1"/>
</dbReference>
<dbReference type="Gene3D" id="3.40.50.720">
    <property type="entry name" value="NAD(P)-binding Rossmann-like Domain"/>
    <property type="match status" value="1"/>
</dbReference>
<dbReference type="HAMAP" id="MF_01413">
    <property type="entry name" value="K_H_efflux_KefC"/>
    <property type="match status" value="1"/>
</dbReference>
<dbReference type="InterPro" id="IPR006153">
    <property type="entry name" value="Cation/H_exchanger_TM"/>
</dbReference>
<dbReference type="InterPro" id="IPR004771">
    <property type="entry name" value="K/H_exchanger"/>
</dbReference>
<dbReference type="InterPro" id="IPR023941">
    <property type="entry name" value="K_H_efflux_KefC"/>
</dbReference>
<dbReference type="InterPro" id="IPR006036">
    <property type="entry name" value="K_uptake_TrkA"/>
</dbReference>
<dbReference type="InterPro" id="IPR038770">
    <property type="entry name" value="Na+/solute_symporter_sf"/>
</dbReference>
<dbReference type="InterPro" id="IPR036291">
    <property type="entry name" value="NAD(P)-bd_dom_sf"/>
</dbReference>
<dbReference type="InterPro" id="IPR003148">
    <property type="entry name" value="RCK_N"/>
</dbReference>
<dbReference type="NCBIfam" id="TIGR00932">
    <property type="entry name" value="2a37"/>
    <property type="match status" value="1"/>
</dbReference>
<dbReference type="NCBIfam" id="NF002924">
    <property type="entry name" value="PRK03562.1"/>
    <property type="match status" value="1"/>
</dbReference>
<dbReference type="PANTHER" id="PTHR46157:SF3">
    <property type="entry name" value="GLUTATHIONE-REGULATED POTASSIUM-EFFLUX SYSTEM PROTEIN KEFC"/>
    <property type="match status" value="1"/>
</dbReference>
<dbReference type="PANTHER" id="PTHR46157">
    <property type="entry name" value="K(+) EFFLUX ANTIPORTER 3, CHLOROPLASTIC"/>
    <property type="match status" value="1"/>
</dbReference>
<dbReference type="Pfam" id="PF00999">
    <property type="entry name" value="Na_H_Exchanger"/>
    <property type="match status" value="1"/>
</dbReference>
<dbReference type="Pfam" id="PF02254">
    <property type="entry name" value="TrkA_N"/>
    <property type="match status" value="1"/>
</dbReference>
<dbReference type="PRINTS" id="PR00335">
    <property type="entry name" value="KUPTAKETRKA"/>
</dbReference>
<dbReference type="SUPFAM" id="SSF51735">
    <property type="entry name" value="NAD(P)-binding Rossmann-fold domains"/>
    <property type="match status" value="1"/>
</dbReference>
<dbReference type="PROSITE" id="PS51201">
    <property type="entry name" value="RCK_N"/>
    <property type="match status" value="1"/>
</dbReference>
<accession>Q9X756</accession>